<reference evidence="5" key="1">
    <citation type="journal article" date="1995" name="Plant Physiol.">
        <title>Ascorbate free radical reductase mRNA levels are induced by wounding.</title>
        <authorList>
            <person name="Grantz A.A."/>
            <person name="Brummell D.A."/>
            <person name="Bennett A.B."/>
        </authorList>
    </citation>
    <scope>NUCLEOTIDE SEQUENCE [GENOMIC DNA]</scope>
    <scope>CATALYTIC ACTIVITY</scope>
    <scope>TISSUE SPECIFICITY</scope>
    <scope>INDUCTION</scope>
    <source>
        <strain evidence="6">cv. Castlemart</strain>
        <tissue evidence="6">Fruit</tissue>
    </source>
</reference>
<dbReference type="EC" id="1.6.5.4"/>
<dbReference type="EMBL" id="L41345">
    <property type="protein sequence ID" value="AAC41654.1"/>
    <property type="molecule type" value="Genomic_DNA"/>
</dbReference>
<dbReference type="PIR" id="T06407">
    <property type="entry name" value="T06407"/>
</dbReference>
<dbReference type="SMR" id="Q43497"/>
<dbReference type="FunCoup" id="Q43497">
    <property type="interactions" value="1883"/>
</dbReference>
<dbReference type="STRING" id="4081.Q43497"/>
<dbReference type="PaxDb" id="4081-Solyc09g009390.2.1"/>
<dbReference type="ProMEX" id="Q43497"/>
<dbReference type="eggNOG" id="KOG1336">
    <property type="taxonomic scope" value="Eukaryota"/>
</dbReference>
<dbReference type="InParanoid" id="Q43497"/>
<dbReference type="Proteomes" id="UP000004994">
    <property type="component" value="Unplaced"/>
</dbReference>
<dbReference type="ExpressionAtlas" id="Q43497">
    <property type="expression patterns" value="baseline and differential"/>
</dbReference>
<dbReference type="GO" id="GO:0005737">
    <property type="term" value="C:cytoplasm"/>
    <property type="evidence" value="ECO:0000318"/>
    <property type="project" value="GO_Central"/>
</dbReference>
<dbReference type="GO" id="GO:0016656">
    <property type="term" value="F:monodehydroascorbate reductase (NADH) activity"/>
    <property type="evidence" value="ECO:0007669"/>
    <property type="project" value="UniProtKB-EC"/>
</dbReference>
<dbReference type="GO" id="GO:0016651">
    <property type="term" value="F:oxidoreductase activity, acting on NAD(P)H"/>
    <property type="evidence" value="ECO:0000318"/>
    <property type="project" value="GO_Central"/>
</dbReference>
<dbReference type="FunFam" id="3.30.390.30:FF:000013">
    <property type="entry name" value="Monodehydroascorbate reductase 3"/>
    <property type="match status" value="1"/>
</dbReference>
<dbReference type="FunFam" id="3.50.50.60:FF:000155">
    <property type="entry name" value="Monodehydroascorbate reductase 3"/>
    <property type="match status" value="1"/>
</dbReference>
<dbReference type="Gene3D" id="3.30.390.30">
    <property type="match status" value="1"/>
</dbReference>
<dbReference type="Gene3D" id="3.50.50.60">
    <property type="entry name" value="FAD/NAD(P)-binding domain"/>
    <property type="match status" value="2"/>
</dbReference>
<dbReference type="InterPro" id="IPR050446">
    <property type="entry name" value="FAD-oxidoreductase/Apoptosis"/>
</dbReference>
<dbReference type="InterPro" id="IPR036188">
    <property type="entry name" value="FAD/NAD-bd_sf"/>
</dbReference>
<dbReference type="InterPro" id="IPR023753">
    <property type="entry name" value="FAD/NAD-binding_dom"/>
</dbReference>
<dbReference type="InterPro" id="IPR016156">
    <property type="entry name" value="FAD/NAD-linked_Rdtase_dimer_sf"/>
</dbReference>
<dbReference type="InterPro" id="IPR048618">
    <property type="entry name" value="MDHAR3-like_C"/>
</dbReference>
<dbReference type="PANTHER" id="PTHR43557">
    <property type="entry name" value="APOPTOSIS-INDUCING FACTOR 1"/>
    <property type="match status" value="1"/>
</dbReference>
<dbReference type="PANTHER" id="PTHR43557:SF5">
    <property type="entry name" value="MONODEHYDROASCORBATE REDUCTASE 1, PEROXISOMAL"/>
    <property type="match status" value="1"/>
</dbReference>
<dbReference type="Pfam" id="PF21791">
    <property type="entry name" value="MDHAR3-like_C"/>
    <property type="match status" value="1"/>
</dbReference>
<dbReference type="Pfam" id="PF07992">
    <property type="entry name" value="Pyr_redox_2"/>
    <property type="match status" value="1"/>
</dbReference>
<dbReference type="PRINTS" id="PR00368">
    <property type="entry name" value="FADPNR"/>
</dbReference>
<dbReference type="PRINTS" id="PR00411">
    <property type="entry name" value="PNDRDTASEI"/>
</dbReference>
<dbReference type="SUPFAM" id="SSF51905">
    <property type="entry name" value="FAD/NAD(P)-binding domain"/>
    <property type="match status" value="1"/>
</dbReference>
<dbReference type="SUPFAM" id="SSF55424">
    <property type="entry name" value="FAD/NAD-linked reductases, dimerisation (C-terminal) domain"/>
    <property type="match status" value="1"/>
</dbReference>
<comment type="function">
    <text>Catalyzes the conversion of monodehydroascorbate to ascorbate, oxidizing NADH in the process.</text>
</comment>
<comment type="catalytic activity">
    <reaction evidence="4">
        <text>2 monodehydro-L-ascorbate radical + NADH + H(+) = 2 L-ascorbate + NAD(+)</text>
        <dbReference type="Rhea" id="RHEA:14581"/>
        <dbReference type="ChEBI" id="CHEBI:15378"/>
        <dbReference type="ChEBI" id="CHEBI:38290"/>
        <dbReference type="ChEBI" id="CHEBI:57540"/>
        <dbReference type="ChEBI" id="CHEBI:57945"/>
        <dbReference type="ChEBI" id="CHEBI:59513"/>
        <dbReference type="EC" id="1.6.5.4"/>
    </reaction>
</comment>
<comment type="cofactor">
    <cofactor evidence="2 3">
        <name>FAD</name>
        <dbReference type="ChEBI" id="CHEBI:57692"/>
    </cofactor>
</comment>
<comment type="subcellular location">
    <subcellularLocation>
        <location evidence="5">Cytoplasm</location>
    </subcellularLocation>
</comment>
<comment type="tissue specificity">
    <text evidence="4">Expressed in leaves, and to a lesser degree in stems, roots and all stages of fruit.</text>
</comment>
<comment type="induction">
    <text evidence="4">By wounding.</text>
</comment>
<comment type="similarity">
    <text evidence="5">Belongs to the FAD-dependent oxidoreductase family.</text>
</comment>
<accession>Q43497</accession>
<evidence type="ECO:0000250" key="1">
    <source>
        <dbReference type="UniProtKB" id="Q652L6"/>
    </source>
</evidence>
<evidence type="ECO:0000250" key="2">
    <source>
        <dbReference type="UniProtKB" id="Q9S926"/>
    </source>
</evidence>
<evidence type="ECO:0000255" key="3">
    <source>
        <dbReference type="RuleBase" id="RU000401"/>
    </source>
</evidence>
<evidence type="ECO:0000269" key="4">
    <source>
    </source>
</evidence>
<evidence type="ECO:0000305" key="5"/>
<evidence type="ECO:0000312" key="6">
    <source>
        <dbReference type="EMBL" id="AAC41654.1"/>
    </source>
</evidence>
<feature type="chain" id="PRO_0000209142" description="Monodehydroascorbate reductase">
    <location>
        <begin position="1"/>
        <end position="433"/>
    </location>
</feature>
<feature type="binding site" evidence="1">
    <location>
        <begin position="13"/>
        <end position="16"/>
    </location>
    <ligand>
        <name>FAD</name>
        <dbReference type="ChEBI" id="CHEBI:57692"/>
    </ligand>
</feature>
<feature type="binding site" evidence="1">
    <location>
        <position position="40"/>
    </location>
    <ligand>
        <name>FAD</name>
        <dbReference type="ChEBI" id="CHEBI:57692"/>
    </ligand>
</feature>
<feature type="binding site" evidence="1">
    <location>
        <position position="47"/>
    </location>
    <ligand>
        <name>FAD</name>
        <dbReference type="ChEBI" id="CHEBI:57692"/>
    </ligand>
</feature>
<feature type="binding site" evidence="1">
    <location>
        <position position="52"/>
    </location>
    <ligand>
        <name>FAD</name>
        <dbReference type="ChEBI" id="CHEBI:57692"/>
    </ligand>
</feature>
<feature type="binding site" evidence="1">
    <location>
        <position position="95"/>
    </location>
    <ligand>
        <name>FAD</name>
        <dbReference type="ChEBI" id="CHEBI:57692"/>
    </ligand>
</feature>
<feature type="binding site" evidence="1">
    <location>
        <begin position="146"/>
        <end position="147"/>
    </location>
    <ligand>
        <name>FAD</name>
        <dbReference type="ChEBI" id="CHEBI:57692"/>
    </ligand>
</feature>
<feature type="binding site" evidence="1">
    <location>
        <begin position="171"/>
        <end position="177"/>
    </location>
    <ligand>
        <name>NAD(+)</name>
        <dbReference type="ChEBI" id="CHEBI:57540"/>
    </ligand>
</feature>
<feature type="binding site" evidence="1">
    <location>
        <begin position="173"/>
        <end position="177"/>
    </location>
    <ligand>
        <name>NADP(+)</name>
        <dbReference type="ChEBI" id="CHEBI:58349"/>
    </ligand>
</feature>
<feature type="binding site" evidence="1">
    <location>
        <position position="195"/>
    </location>
    <ligand>
        <name>NAD(+)</name>
        <dbReference type="ChEBI" id="CHEBI:57540"/>
    </ligand>
</feature>
<feature type="binding site" evidence="1">
    <location>
        <position position="201"/>
    </location>
    <ligand>
        <name>NAD(+)</name>
        <dbReference type="ChEBI" id="CHEBI:57540"/>
    </ligand>
</feature>
<feature type="binding site" evidence="1">
    <location>
        <position position="201"/>
    </location>
    <ligand>
        <name>NADP(+)</name>
        <dbReference type="ChEBI" id="CHEBI:58349"/>
    </ligand>
</feature>
<feature type="binding site" evidence="1">
    <location>
        <position position="260"/>
    </location>
    <ligand>
        <name>NAD(+)</name>
        <dbReference type="ChEBI" id="CHEBI:57540"/>
    </ligand>
</feature>
<feature type="binding site" evidence="1">
    <location>
        <position position="260"/>
    </location>
    <ligand>
        <name>NADP(+)</name>
        <dbReference type="ChEBI" id="CHEBI:58349"/>
    </ligand>
</feature>
<feature type="binding site" evidence="1">
    <location>
        <position position="297"/>
    </location>
    <ligand>
        <name>FAD</name>
        <dbReference type="ChEBI" id="CHEBI:57692"/>
    </ligand>
</feature>
<feature type="binding site" evidence="1">
    <location>
        <begin position="313"/>
        <end position="314"/>
    </location>
    <ligand>
        <name>NAD(+)</name>
        <dbReference type="ChEBI" id="CHEBI:57540"/>
    </ligand>
</feature>
<feature type="binding site" evidence="1">
    <location>
        <begin position="313"/>
        <end position="314"/>
    </location>
    <ligand>
        <name>NADP(+)</name>
        <dbReference type="ChEBI" id="CHEBI:58349"/>
    </ligand>
</feature>
<feature type="binding site" evidence="1">
    <location>
        <position position="315"/>
    </location>
    <ligand>
        <name>FAD</name>
        <dbReference type="ChEBI" id="CHEBI:57692"/>
    </ligand>
</feature>
<feature type="binding site" evidence="1">
    <location>
        <position position="319"/>
    </location>
    <ligand>
        <name>L-ascorbate</name>
        <dbReference type="ChEBI" id="CHEBI:38290"/>
    </ligand>
</feature>
<feature type="binding site" evidence="1">
    <location>
        <position position="348"/>
    </location>
    <ligand>
        <name>FAD</name>
        <dbReference type="ChEBI" id="CHEBI:57692"/>
    </ligand>
</feature>
<feature type="binding site" evidence="1">
    <location>
        <position position="348"/>
    </location>
    <ligand>
        <name>NAD(+)</name>
        <dbReference type="ChEBI" id="CHEBI:57540"/>
    </ligand>
</feature>
<feature type="binding site" evidence="1">
    <location>
        <position position="348"/>
    </location>
    <ligand>
        <name>NADP(+)</name>
        <dbReference type="ChEBI" id="CHEBI:58349"/>
    </ligand>
</feature>
<feature type="binding site" evidence="1">
    <location>
        <position position="350"/>
    </location>
    <ligand>
        <name>L-ascorbate</name>
        <dbReference type="ChEBI" id="CHEBI:38290"/>
    </ligand>
</feature>
<organism evidence="6">
    <name type="scientific">Solanum lycopersicum</name>
    <name type="common">Tomato</name>
    <name type="synonym">Lycopersicon esculentum</name>
    <dbReference type="NCBI Taxonomy" id="4081"/>
    <lineage>
        <taxon>Eukaryota</taxon>
        <taxon>Viridiplantae</taxon>
        <taxon>Streptophyta</taxon>
        <taxon>Embryophyta</taxon>
        <taxon>Tracheophyta</taxon>
        <taxon>Spermatophyta</taxon>
        <taxon>Magnoliopsida</taxon>
        <taxon>eudicotyledons</taxon>
        <taxon>Gunneridae</taxon>
        <taxon>Pentapetalae</taxon>
        <taxon>asterids</taxon>
        <taxon>lamiids</taxon>
        <taxon>Solanales</taxon>
        <taxon>Solanaceae</taxon>
        <taxon>Solanoideae</taxon>
        <taxon>Solaneae</taxon>
        <taxon>Solanum</taxon>
        <taxon>Solanum subgen. Lycopersicon</taxon>
    </lineage>
</organism>
<sequence>MAEKSFKYVIVGGGVSAGYAAREFAKQGVKPGELAIISKEAVAPYERPALSKAYLFPEGAARLPGFHVCVGSGGERQLPEWYAEKGISLILSTEIVKADLASKTLVSAAGESFKYQTLVIATGTTVLKLSDFGVQGADSKNIFYLREIDDADQLVEALKAKKNGKAVVVGGGYIGLELSAVLRLNNIEVNMVYPEPWCMPRLFTEGIAAFYEGYYKNKGVNIIKGTVAVGFDTHPNGEVKEVKLKDGRVLEADIVVVGVGARPLTTLFKGQVEEEKGGIKTDAFFKTSVPDVYAVGDVATFPLKMYNEIRRVEHVDHSRKSAEQAVKAIFASEQGKSVDEYDYLPYFYSRAFDLSWQFYGDNVGETVLFGDADPNSATHKFGQYWIKDGKIVGAFLESGSPEENKAIAKVAKVQPPATLDQLAQEGISFASKI</sequence>
<name>MDAR_SOLLC</name>
<gene>
    <name evidence="6" type="primary">AFRR</name>
</gene>
<protein>
    <recommendedName>
        <fullName>Monodehydroascorbate reductase</fullName>
        <shortName>MDAR</shortName>
        <ecNumber>1.6.5.4</ecNumber>
    </recommendedName>
    <alternativeName>
        <fullName>Ascorbate free radical reductase</fullName>
        <shortName>AFR reductase</shortName>
    </alternativeName>
</protein>
<proteinExistence type="evidence at protein level"/>
<keyword id="KW-0963">Cytoplasm</keyword>
<keyword id="KW-0274">FAD</keyword>
<keyword id="KW-0285">Flavoprotein</keyword>
<keyword id="KW-0520">NAD</keyword>
<keyword id="KW-0521">NADP</keyword>
<keyword id="KW-0560">Oxidoreductase</keyword>
<keyword id="KW-0676">Redox-active center</keyword>
<keyword id="KW-1185">Reference proteome</keyword>